<protein>
    <recommendedName>
        <fullName evidence="1">Protein pelota homolog</fullName>
        <ecNumber evidence="1">3.1.-.-</ecNumber>
    </recommendedName>
</protein>
<comment type="function">
    <text evidence="1">May function in recognizing stalled ribosomes, interact with stem-loop structures in stalled mRNA molecules, and effect endonucleolytic cleavage of the mRNA. May play a role in the release non-functional ribosomes and degradation of damaged mRNAs. Has endoribonuclease activity.</text>
</comment>
<comment type="cofactor">
    <cofactor evidence="1">
        <name>a divalent metal cation</name>
        <dbReference type="ChEBI" id="CHEBI:60240"/>
    </cofactor>
</comment>
<comment type="subunit">
    <text evidence="1">Monomer.</text>
</comment>
<comment type="subcellular location">
    <subcellularLocation>
        <location evidence="1">Cytoplasm</location>
    </subcellularLocation>
</comment>
<comment type="domain">
    <text evidence="1">The N-terminal domain has the RNA-binding Sm fold. It harbors the endoribonuclease activity.</text>
</comment>
<comment type="similarity">
    <text evidence="1">Belongs to the eukaryotic release factor 1 family. Pelota subfamily.</text>
</comment>
<feature type="chain" id="PRO_0000361781" description="Protein pelota homolog">
    <location>
        <begin position="1"/>
        <end position="338"/>
    </location>
</feature>
<keyword id="KW-0963">Cytoplasm</keyword>
<keyword id="KW-0255">Endonuclease</keyword>
<keyword id="KW-0378">Hydrolase</keyword>
<keyword id="KW-0479">Metal-binding</keyword>
<keyword id="KW-0540">Nuclease</keyword>
<keyword id="KW-1185">Reference proteome</keyword>
<name>PELO_CALMQ</name>
<reference key="1">
    <citation type="submission" date="2007-10" db="EMBL/GenBank/DDBJ databases">
        <title>Complete sequence of Caldivirga maquilingensis IC-167.</title>
        <authorList>
            <consortium name="US DOE Joint Genome Institute"/>
            <person name="Copeland A."/>
            <person name="Lucas S."/>
            <person name="Lapidus A."/>
            <person name="Barry K."/>
            <person name="Glavina del Rio T."/>
            <person name="Dalin E."/>
            <person name="Tice H."/>
            <person name="Pitluck S."/>
            <person name="Saunders E."/>
            <person name="Brettin T."/>
            <person name="Bruce D."/>
            <person name="Detter J.C."/>
            <person name="Han C."/>
            <person name="Schmutz J."/>
            <person name="Larimer F."/>
            <person name="Land M."/>
            <person name="Hauser L."/>
            <person name="Kyrpides N."/>
            <person name="Ivanova N."/>
            <person name="Biddle J.F."/>
            <person name="Zhang Z."/>
            <person name="Fitz-Gibbon S.T."/>
            <person name="Lowe T.M."/>
            <person name="Saltikov C."/>
            <person name="House C.H."/>
            <person name="Richardson P."/>
        </authorList>
    </citation>
    <scope>NUCLEOTIDE SEQUENCE [LARGE SCALE GENOMIC DNA]</scope>
    <source>
        <strain>ATCC 700844 / DSM 13496 / JCM 10307 / IC-167</strain>
    </source>
</reference>
<organism>
    <name type="scientific">Caldivirga maquilingensis (strain ATCC 700844 / DSM 13496 / JCM 10307 / IC-167)</name>
    <dbReference type="NCBI Taxonomy" id="397948"/>
    <lineage>
        <taxon>Archaea</taxon>
        <taxon>Thermoproteota</taxon>
        <taxon>Thermoprotei</taxon>
        <taxon>Thermoproteales</taxon>
        <taxon>Thermoproteaceae</taxon>
        <taxon>Caldivirga</taxon>
    </lineage>
</organism>
<accession>A8MB46</accession>
<dbReference type="EC" id="3.1.-.-" evidence="1"/>
<dbReference type="EMBL" id="CP000852">
    <property type="protein sequence ID" value="ABW02675.1"/>
    <property type="molecule type" value="Genomic_DNA"/>
</dbReference>
<dbReference type="SMR" id="A8MB46"/>
<dbReference type="STRING" id="397948.Cmaq_1858"/>
<dbReference type="KEGG" id="cma:Cmaq_1858"/>
<dbReference type="eggNOG" id="arCOG01741">
    <property type="taxonomic scope" value="Archaea"/>
</dbReference>
<dbReference type="HOGENOM" id="CLU_023334_0_0_2"/>
<dbReference type="Proteomes" id="UP000001137">
    <property type="component" value="Chromosome"/>
</dbReference>
<dbReference type="GO" id="GO:0005737">
    <property type="term" value="C:cytoplasm"/>
    <property type="evidence" value="ECO:0007669"/>
    <property type="project" value="UniProtKB-SubCell"/>
</dbReference>
<dbReference type="GO" id="GO:0004519">
    <property type="term" value="F:endonuclease activity"/>
    <property type="evidence" value="ECO:0007669"/>
    <property type="project" value="UniProtKB-UniRule"/>
</dbReference>
<dbReference type="GO" id="GO:0046872">
    <property type="term" value="F:metal ion binding"/>
    <property type="evidence" value="ECO:0007669"/>
    <property type="project" value="UniProtKB-UniRule"/>
</dbReference>
<dbReference type="GO" id="GO:0070651">
    <property type="term" value="P:nonfunctional rRNA decay"/>
    <property type="evidence" value="ECO:0007669"/>
    <property type="project" value="TreeGrafter"/>
</dbReference>
<dbReference type="GO" id="GO:0070966">
    <property type="term" value="P:nuclear-transcribed mRNA catabolic process, no-go decay"/>
    <property type="evidence" value="ECO:0007669"/>
    <property type="project" value="InterPro"/>
</dbReference>
<dbReference type="GO" id="GO:0070481">
    <property type="term" value="P:nuclear-transcribed mRNA catabolic process, non-stop decay"/>
    <property type="evidence" value="ECO:0007669"/>
    <property type="project" value="InterPro"/>
</dbReference>
<dbReference type="GO" id="GO:0032790">
    <property type="term" value="P:ribosome disassembly"/>
    <property type="evidence" value="ECO:0007669"/>
    <property type="project" value="TreeGrafter"/>
</dbReference>
<dbReference type="GO" id="GO:0071025">
    <property type="term" value="P:RNA surveillance"/>
    <property type="evidence" value="ECO:0007669"/>
    <property type="project" value="InterPro"/>
</dbReference>
<dbReference type="Gene3D" id="3.30.1330.30">
    <property type="match status" value="1"/>
</dbReference>
<dbReference type="Gene3D" id="3.30.420.60">
    <property type="entry name" value="eRF1 domain 2"/>
    <property type="match status" value="1"/>
</dbReference>
<dbReference type="Gene3D" id="2.30.30.870">
    <property type="entry name" value="Pelota, domain A"/>
    <property type="match status" value="1"/>
</dbReference>
<dbReference type="HAMAP" id="MF_01853">
    <property type="entry name" value="PelO"/>
    <property type="match status" value="1"/>
</dbReference>
<dbReference type="InterPro" id="IPR042226">
    <property type="entry name" value="eFR1_2_sf"/>
</dbReference>
<dbReference type="InterPro" id="IPR005140">
    <property type="entry name" value="eRF1_1_Pelota"/>
</dbReference>
<dbReference type="InterPro" id="IPR005142">
    <property type="entry name" value="eRF1_3"/>
</dbReference>
<dbReference type="InterPro" id="IPR038069">
    <property type="entry name" value="Pelota/DOM34_N"/>
</dbReference>
<dbReference type="InterPro" id="IPR023521">
    <property type="entry name" value="Pelota_arc"/>
</dbReference>
<dbReference type="InterPro" id="IPR029064">
    <property type="entry name" value="Ribosomal_eL30-like_sf"/>
</dbReference>
<dbReference type="InterPro" id="IPR004405">
    <property type="entry name" value="Transl-rel_pelota"/>
</dbReference>
<dbReference type="PANTHER" id="PTHR10853">
    <property type="entry name" value="PELOTA"/>
    <property type="match status" value="1"/>
</dbReference>
<dbReference type="PANTHER" id="PTHR10853:SF0">
    <property type="entry name" value="PROTEIN PELOTA HOMOLOG"/>
    <property type="match status" value="1"/>
</dbReference>
<dbReference type="Pfam" id="PF03463">
    <property type="entry name" value="eRF1_1"/>
    <property type="match status" value="1"/>
</dbReference>
<dbReference type="Pfam" id="PF03465">
    <property type="entry name" value="eRF1_3"/>
    <property type="match status" value="1"/>
</dbReference>
<dbReference type="SMART" id="SM01194">
    <property type="entry name" value="eRF1_1"/>
    <property type="match status" value="1"/>
</dbReference>
<dbReference type="SUPFAM" id="SSF159065">
    <property type="entry name" value="Dom34/Pelota N-terminal domain-like"/>
    <property type="match status" value="1"/>
</dbReference>
<dbReference type="SUPFAM" id="SSF55315">
    <property type="entry name" value="L30e-like"/>
    <property type="match status" value="1"/>
</dbReference>
<evidence type="ECO:0000255" key="1">
    <source>
        <dbReference type="HAMAP-Rule" id="MF_01853"/>
    </source>
</evidence>
<sequence>MLMKINEGKNYVELTVERVEDLFILYLILKPGDLVYSWTVREVRGRSGERFGREKVYLGVRVRDLEFHEPRGVLRIRGIIEDYPEWLEGAGGSYHSLEVGIGSTLKIMRSINRDYLEQLINTLSSGIKVLIVSVSIEETTVALATRLGVSIIATISNNYIQGKESGGSLINQRYIDDVSKVVRQLTEVHKPNALIIATQGMLMSSIPDIEVKGVPVERVIVSEGGLSGIYEVERRGYLDKVGLKLGYDTVNRIMEELSKGSGLVALGDEIYEALSMGAVDSLVMLDKLLIEKAEESRRIIDDCIRTRAKLIIVPDGSEAGKLLNGLGGLAALLRFRIK</sequence>
<proteinExistence type="inferred from homology"/>
<gene>
    <name evidence="1" type="primary">pelA</name>
    <name type="ordered locus">Cmaq_1858</name>
</gene>